<proteinExistence type="inferred from homology"/>
<comment type="subcellular location">
    <subcellularLocation>
        <location evidence="1">Cytoplasm</location>
    </subcellularLocation>
</comment>
<comment type="similarity">
    <text evidence="3">Belongs to the SarZ family.</text>
</comment>
<protein>
    <recommendedName>
        <fullName>HTH-type transcriptional regulator SarZ</fullName>
    </recommendedName>
    <alternativeName>
        <fullName>Staphylococcal accessory regulator Z</fullName>
    </alternativeName>
</protein>
<sequence>MYIKDSYLSNQLCFLLYVTSKEVIKKYTYYLKKHDLTYTSFMVIMAIENEEKINIKSLGRRVFLDSGTLTPLLKKLEKKGYVQRMREKEDERNLQITLTESGINIKPTLKAISDQVFEDFDISQDEKDNLVNSLKHVISNNFDYTTH</sequence>
<organism>
    <name type="scientific">Staphylococcus haemolyticus (strain JCSC1435)</name>
    <dbReference type="NCBI Taxonomy" id="279808"/>
    <lineage>
        <taxon>Bacteria</taxon>
        <taxon>Bacillati</taxon>
        <taxon>Bacillota</taxon>
        <taxon>Bacilli</taxon>
        <taxon>Bacillales</taxon>
        <taxon>Staphylococcaceae</taxon>
        <taxon>Staphylococcus</taxon>
    </lineage>
</organism>
<gene>
    <name type="primary">sarZ</name>
    <name type="ordered locus">SH0663</name>
</gene>
<keyword id="KW-0963">Cytoplasm</keyword>
<keyword id="KW-0238">DNA-binding</keyword>
<keyword id="KW-0804">Transcription</keyword>
<keyword id="KW-0805">Transcription regulation</keyword>
<feature type="chain" id="PRO_0000284465" description="HTH-type transcriptional regulator SarZ">
    <location>
        <begin position="1"/>
        <end position="147"/>
    </location>
</feature>
<feature type="domain" description="HTH marR-type" evidence="2">
    <location>
        <begin position="9"/>
        <end position="139"/>
    </location>
</feature>
<feature type="DNA-binding region" description="H-T-H motif" evidence="2">
    <location>
        <begin position="55"/>
        <end position="78"/>
    </location>
</feature>
<name>SARZ_STAHJ</name>
<evidence type="ECO:0000250" key="1"/>
<evidence type="ECO:0000255" key="2">
    <source>
        <dbReference type="PROSITE-ProRule" id="PRU00345"/>
    </source>
</evidence>
<evidence type="ECO:0000305" key="3"/>
<dbReference type="EMBL" id="AP006716">
    <property type="protein sequence ID" value="BAE03972.1"/>
    <property type="molecule type" value="Genomic_DNA"/>
</dbReference>
<dbReference type="RefSeq" id="WP_011274988.1">
    <property type="nucleotide sequence ID" value="NC_007168.1"/>
</dbReference>
<dbReference type="SMR" id="Q4L8Q3"/>
<dbReference type="KEGG" id="sha:SH0663"/>
<dbReference type="eggNOG" id="COG1846">
    <property type="taxonomic scope" value="Bacteria"/>
</dbReference>
<dbReference type="HOGENOM" id="CLU_083287_3_2_9"/>
<dbReference type="OrthoDB" id="9806864at2"/>
<dbReference type="Proteomes" id="UP000000543">
    <property type="component" value="Chromosome"/>
</dbReference>
<dbReference type="GO" id="GO:0005737">
    <property type="term" value="C:cytoplasm"/>
    <property type="evidence" value="ECO:0007669"/>
    <property type="project" value="UniProtKB-SubCell"/>
</dbReference>
<dbReference type="GO" id="GO:0003677">
    <property type="term" value="F:DNA binding"/>
    <property type="evidence" value="ECO:0007669"/>
    <property type="project" value="UniProtKB-KW"/>
</dbReference>
<dbReference type="GO" id="GO:0003700">
    <property type="term" value="F:DNA-binding transcription factor activity"/>
    <property type="evidence" value="ECO:0007669"/>
    <property type="project" value="InterPro"/>
</dbReference>
<dbReference type="FunFam" id="1.10.10.10:FF:000163">
    <property type="entry name" value="MarR family transcriptional regulator"/>
    <property type="match status" value="1"/>
</dbReference>
<dbReference type="Gene3D" id="1.10.10.10">
    <property type="entry name" value="Winged helix-like DNA-binding domain superfamily/Winged helix DNA-binding domain"/>
    <property type="match status" value="1"/>
</dbReference>
<dbReference type="InterPro" id="IPR000835">
    <property type="entry name" value="HTH_MarR-typ"/>
</dbReference>
<dbReference type="InterPro" id="IPR055166">
    <property type="entry name" value="Transc_reg_Sar_Rot_HTH"/>
</dbReference>
<dbReference type="InterPro" id="IPR036388">
    <property type="entry name" value="WH-like_DNA-bd_sf"/>
</dbReference>
<dbReference type="InterPro" id="IPR036390">
    <property type="entry name" value="WH_DNA-bd_sf"/>
</dbReference>
<dbReference type="PANTHER" id="PTHR42756">
    <property type="entry name" value="TRANSCRIPTIONAL REGULATOR, MARR"/>
    <property type="match status" value="1"/>
</dbReference>
<dbReference type="PANTHER" id="PTHR42756:SF1">
    <property type="entry name" value="TRANSCRIPTIONAL REPRESSOR OF EMRAB OPERON"/>
    <property type="match status" value="1"/>
</dbReference>
<dbReference type="Pfam" id="PF22381">
    <property type="entry name" value="Staph_reg_Sar_Rot"/>
    <property type="match status" value="1"/>
</dbReference>
<dbReference type="PRINTS" id="PR00598">
    <property type="entry name" value="HTHMARR"/>
</dbReference>
<dbReference type="SMART" id="SM00347">
    <property type="entry name" value="HTH_MARR"/>
    <property type="match status" value="1"/>
</dbReference>
<dbReference type="SUPFAM" id="SSF46785">
    <property type="entry name" value="Winged helix' DNA-binding domain"/>
    <property type="match status" value="1"/>
</dbReference>
<dbReference type="PROSITE" id="PS50995">
    <property type="entry name" value="HTH_MARR_2"/>
    <property type="match status" value="1"/>
</dbReference>
<accession>Q4L8Q3</accession>
<reference key="1">
    <citation type="journal article" date="2005" name="J. Bacteriol.">
        <title>Whole-genome sequencing of Staphylococcus haemolyticus uncovers the extreme plasticity of its genome and the evolution of human-colonizing staphylococcal species.</title>
        <authorList>
            <person name="Takeuchi F."/>
            <person name="Watanabe S."/>
            <person name="Baba T."/>
            <person name="Yuzawa H."/>
            <person name="Ito T."/>
            <person name="Morimoto Y."/>
            <person name="Kuroda M."/>
            <person name="Cui L."/>
            <person name="Takahashi M."/>
            <person name="Ankai A."/>
            <person name="Baba S."/>
            <person name="Fukui S."/>
            <person name="Lee J.C."/>
            <person name="Hiramatsu K."/>
        </authorList>
    </citation>
    <scope>NUCLEOTIDE SEQUENCE [LARGE SCALE GENOMIC DNA]</scope>
    <source>
        <strain>JCSC1435</strain>
    </source>
</reference>